<proteinExistence type="inferred from homology"/>
<feature type="chain" id="PRO_0000107547" description="Acetate kinase 2">
    <location>
        <begin position="1"/>
        <end position="398"/>
    </location>
</feature>
<feature type="active site" description="Proton donor/acceptor" evidence="1">
    <location>
        <position position="148"/>
    </location>
</feature>
<feature type="binding site" evidence="1">
    <location>
        <position position="7"/>
    </location>
    <ligand>
        <name>Mg(2+)</name>
        <dbReference type="ChEBI" id="CHEBI:18420"/>
    </ligand>
</feature>
<feature type="binding site" evidence="1">
    <location>
        <position position="14"/>
    </location>
    <ligand>
        <name>ATP</name>
        <dbReference type="ChEBI" id="CHEBI:30616"/>
    </ligand>
</feature>
<feature type="binding site" evidence="1">
    <location>
        <position position="91"/>
    </location>
    <ligand>
        <name>substrate</name>
    </ligand>
</feature>
<feature type="binding site" evidence="1">
    <location>
        <begin position="208"/>
        <end position="212"/>
    </location>
    <ligand>
        <name>ATP</name>
        <dbReference type="ChEBI" id="CHEBI:30616"/>
    </ligand>
</feature>
<feature type="binding site" evidence="1">
    <location>
        <begin position="283"/>
        <end position="285"/>
    </location>
    <ligand>
        <name>ATP</name>
        <dbReference type="ChEBI" id="CHEBI:30616"/>
    </ligand>
</feature>
<feature type="binding site" evidence="1">
    <location>
        <begin position="331"/>
        <end position="335"/>
    </location>
    <ligand>
        <name>ATP</name>
        <dbReference type="ChEBI" id="CHEBI:30616"/>
    </ligand>
</feature>
<feature type="binding site" evidence="1">
    <location>
        <position position="384"/>
    </location>
    <ligand>
        <name>Mg(2+)</name>
        <dbReference type="ChEBI" id="CHEBI:18420"/>
    </ligand>
</feature>
<feature type="site" description="Transition state stabilizer" evidence="1">
    <location>
        <position position="180"/>
    </location>
</feature>
<feature type="site" description="Transition state stabilizer" evidence="1">
    <location>
        <position position="241"/>
    </location>
</feature>
<reference key="1">
    <citation type="journal article" date="2002" name="Proc. Natl. Acad. Sci. U.S.A.">
        <title>Complete genome sequence of Clostridium perfringens, an anaerobic flesh-eater.</title>
        <authorList>
            <person name="Shimizu T."/>
            <person name="Ohtani K."/>
            <person name="Hirakawa H."/>
            <person name="Ohshima K."/>
            <person name="Yamashita A."/>
            <person name="Shiba T."/>
            <person name="Ogasawara N."/>
            <person name="Hattori M."/>
            <person name="Kuhara S."/>
            <person name="Hayashi H."/>
        </authorList>
    </citation>
    <scope>NUCLEOTIDE SEQUENCE [LARGE SCALE GENOMIC DNA]</scope>
    <source>
        <strain>13 / Type A</strain>
    </source>
</reference>
<dbReference type="EC" id="2.7.2.1" evidence="1"/>
<dbReference type="EMBL" id="BA000016">
    <property type="protein sequence ID" value="BAB81430.1"/>
    <property type="molecule type" value="Genomic_DNA"/>
</dbReference>
<dbReference type="RefSeq" id="WP_003475280.1">
    <property type="nucleotide sequence ID" value="NC_003366.1"/>
</dbReference>
<dbReference type="SMR" id="Q8XJN2"/>
<dbReference type="STRING" id="195102.gene:10490988"/>
<dbReference type="KEGG" id="cpe:CPE1724"/>
<dbReference type="HOGENOM" id="CLU_020352_0_1_9"/>
<dbReference type="UniPathway" id="UPA00340">
    <property type="reaction ID" value="UER00458"/>
</dbReference>
<dbReference type="Proteomes" id="UP000000818">
    <property type="component" value="Chromosome"/>
</dbReference>
<dbReference type="GO" id="GO:0005737">
    <property type="term" value="C:cytoplasm"/>
    <property type="evidence" value="ECO:0007669"/>
    <property type="project" value="UniProtKB-SubCell"/>
</dbReference>
<dbReference type="GO" id="GO:0008776">
    <property type="term" value="F:acetate kinase activity"/>
    <property type="evidence" value="ECO:0007669"/>
    <property type="project" value="UniProtKB-UniRule"/>
</dbReference>
<dbReference type="GO" id="GO:0005524">
    <property type="term" value="F:ATP binding"/>
    <property type="evidence" value="ECO:0007669"/>
    <property type="project" value="UniProtKB-KW"/>
</dbReference>
<dbReference type="GO" id="GO:0000287">
    <property type="term" value="F:magnesium ion binding"/>
    <property type="evidence" value="ECO:0007669"/>
    <property type="project" value="UniProtKB-UniRule"/>
</dbReference>
<dbReference type="GO" id="GO:0006083">
    <property type="term" value="P:acetate metabolic process"/>
    <property type="evidence" value="ECO:0007669"/>
    <property type="project" value="TreeGrafter"/>
</dbReference>
<dbReference type="GO" id="GO:0006085">
    <property type="term" value="P:acetyl-CoA biosynthetic process"/>
    <property type="evidence" value="ECO:0007669"/>
    <property type="project" value="UniProtKB-UniRule"/>
</dbReference>
<dbReference type="CDD" id="cd24010">
    <property type="entry name" value="ASKHA_NBD_AcK_PK"/>
    <property type="match status" value="1"/>
</dbReference>
<dbReference type="Gene3D" id="3.30.420.40">
    <property type="match status" value="2"/>
</dbReference>
<dbReference type="HAMAP" id="MF_00020">
    <property type="entry name" value="Acetate_kinase"/>
    <property type="match status" value="1"/>
</dbReference>
<dbReference type="InterPro" id="IPR004372">
    <property type="entry name" value="Ac/propionate_kinase"/>
</dbReference>
<dbReference type="InterPro" id="IPR000890">
    <property type="entry name" value="Aliphatic_acid_kin_short-chain"/>
</dbReference>
<dbReference type="InterPro" id="IPR023865">
    <property type="entry name" value="Aliphatic_acid_kinase_CS"/>
</dbReference>
<dbReference type="InterPro" id="IPR043129">
    <property type="entry name" value="ATPase_NBD"/>
</dbReference>
<dbReference type="NCBIfam" id="TIGR00016">
    <property type="entry name" value="ackA"/>
    <property type="match status" value="1"/>
</dbReference>
<dbReference type="PANTHER" id="PTHR21060">
    <property type="entry name" value="ACETATE KINASE"/>
    <property type="match status" value="1"/>
</dbReference>
<dbReference type="PANTHER" id="PTHR21060:SF15">
    <property type="entry name" value="ACETATE KINASE-RELATED"/>
    <property type="match status" value="1"/>
</dbReference>
<dbReference type="Pfam" id="PF00871">
    <property type="entry name" value="Acetate_kinase"/>
    <property type="match status" value="1"/>
</dbReference>
<dbReference type="PIRSF" id="PIRSF000722">
    <property type="entry name" value="Acetate_prop_kin"/>
    <property type="match status" value="1"/>
</dbReference>
<dbReference type="PRINTS" id="PR00471">
    <property type="entry name" value="ACETATEKNASE"/>
</dbReference>
<dbReference type="SUPFAM" id="SSF53067">
    <property type="entry name" value="Actin-like ATPase domain"/>
    <property type="match status" value="2"/>
</dbReference>
<dbReference type="PROSITE" id="PS01075">
    <property type="entry name" value="ACETATE_KINASE_1"/>
    <property type="match status" value="1"/>
</dbReference>
<dbReference type="PROSITE" id="PS01076">
    <property type="entry name" value="ACETATE_KINASE_2"/>
    <property type="match status" value="1"/>
</dbReference>
<comment type="function">
    <text evidence="1">Catalyzes the formation of acetyl phosphate from acetate and ATP. Can also catalyze the reverse reaction.</text>
</comment>
<comment type="catalytic activity">
    <reaction evidence="1">
        <text>acetate + ATP = acetyl phosphate + ADP</text>
        <dbReference type="Rhea" id="RHEA:11352"/>
        <dbReference type="ChEBI" id="CHEBI:22191"/>
        <dbReference type="ChEBI" id="CHEBI:30089"/>
        <dbReference type="ChEBI" id="CHEBI:30616"/>
        <dbReference type="ChEBI" id="CHEBI:456216"/>
        <dbReference type="EC" id="2.7.2.1"/>
    </reaction>
</comment>
<comment type="cofactor">
    <cofactor evidence="1">
        <name>Mg(2+)</name>
        <dbReference type="ChEBI" id="CHEBI:18420"/>
    </cofactor>
    <cofactor evidence="1">
        <name>Mn(2+)</name>
        <dbReference type="ChEBI" id="CHEBI:29035"/>
    </cofactor>
    <text evidence="1">Mg(2+). Can also accept Mn(2+).</text>
</comment>
<comment type="pathway">
    <text evidence="1">Metabolic intermediate biosynthesis; acetyl-CoA biosynthesis; acetyl-CoA from acetate: step 1/2.</text>
</comment>
<comment type="subunit">
    <text evidence="1">Homodimer.</text>
</comment>
<comment type="subcellular location">
    <subcellularLocation>
        <location evidence="1">Cytoplasm</location>
    </subcellularLocation>
</comment>
<comment type="similarity">
    <text evidence="1">Belongs to the acetokinase family.</text>
</comment>
<keyword id="KW-0067">ATP-binding</keyword>
<keyword id="KW-0963">Cytoplasm</keyword>
<keyword id="KW-0418">Kinase</keyword>
<keyword id="KW-0460">Magnesium</keyword>
<keyword id="KW-0479">Metal-binding</keyword>
<keyword id="KW-0547">Nucleotide-binding</keyword>
<keyword id="KW-1185">Reference proteome</keyword>
<keyword id="KW-0808">Transferase</keyword>
<evidence type="ECO:0000255" key="1">
    <source>
        <dbReference type="HAMAP-Rule" id="MF_00020"/>
    </source>
</evidence>
<gene>
    <name evidence="1" type="primary">ackA2</name>
    <name type="synonym">ackB</name>
    <name type="ordered locus">CPE1724</name>
</gene>
<protein>
    <recommendedName>
        <fullName evidence="1">Acetate kinase 2</fullName>
        <ecNumber evidence="1">2.7.2.1</ecNumber>
    </recommendedName>
    <alternativeName>
        <fullName evidence="1">Acetokinase 2</fullName>
    </alternativeName>
</protein>
<organism>
    <name type="scientific">Clostridium perfringens (strain 13 / Type A)</name>
    <dbReference type="NCBI Taxonomy" id="195102"/>
    <lineage>
        <taxon>Bacteria</taxon>
        <taxon>Bacillati</taxon>
        <taxon>Bacillota</taxon>
        <taxon>Clostridia</taxon>
        <taxon>Eubacteriales</taxon>
        <taxon>Clostridiaceae</taxon>
        <taxon>Clostridium</taxon>
    </lineage>
</organism>
<sequence>MNVLVINCGSSSLKYQLIDMDTENALATGLVERIGLEGANLTQKSEGKDKYEIVEPMKDHQDAIRLVLGALIDEKHGVIKSLDEINAIGHRVVHGGEKYAESALVTEEVMKDLEECAKLAPLHNPANIIGINACKALMPNVPMVVVFDTAFHQTMPEKAFVYALPYELYEKEHIRKYGFHGTSHKYVSAKIAEAMGKNIEDLKIITCHLGNGASIAAIKNGKCVDTTMGFTPLEGLVMGTRCGNIDPAVVTYLIDELGYTSQEVNTLMNKKSGIFGVSGVSSDFRDVEAAADKGSKEAQIALDLFRNSVKKYIGAYIAEMNGCDVIVFTAGVGENSIIERGAICRDLEFLGIELDEERNNIRAKVAEISKEGSRIKLFVVPTNEELMIAQDTVSIVSK</sequence>
<name>ACKA2_CLOPE</name>
<accession>Q8XJN2</accession>